<proteinExistence type="inferred from homology"/>
<name>MURI_MYCMM</name>
<feature type="chain" id="PRO_1000114055" description="Glutamate racemase">
    <location>
        <begin position="1"/>
        <end position="271"/>
    </location>
</feature>
<feature type="active site" description="Proton donor/acceptor" evidence="1">
    <location>
        <position position="75"/>
    </location>
</feature>
<feature type="active site" description="Proton donor/acceptor" evidence="1">
    <location>
        <position position="185"/>
    </location>
</feature>
<feature type="binding site" evidence="1">
    <location>
        <begin position="12"/>
        <end position="13"/>
    </location>
    <ligand>
        <name>substrate</name>
    </ligand>
</feature>
<feature type="binding site" evidence="1">
    <location>
        <begin position="44"/>
        <end position="45"/>
    </location>
    <ligand>
        <name>substrate</name>
    </ligand>
</feature>
<feature type="binding site" evidence="1">
    <location>
        <begin position="76"/>
        <end position="77"/>
    </location>
    <ligand>
        <name>substrate</name>
    </ligand>
</feature>
<feature type="binding site" evidence="1">
    <location>
        <begin position="186"/>
        <end position="187"/>
    </location>
    <ligand>
        <name>substrate</name>
    </ligand>
</feature>
<gene>
    <name evidence="1" type="primary">murI</name>
    <name type="ordered locus">MMAR_4058</name>
</gene>
<sequence>MSSPLAPVGIFDSGVGGLTVARAIIDQLPDEDIVYVGDTGNGPYGPLTIPEVRAHALAIGDDLVGRGVKALVIACNTASAACLRDARERYDVPVVEVILPAVRRAVATTRNGRIGVIGTRATITSHAYQDAFAAARDTEITAVACPRFVDFVERGVTSGRQVLGLAEGYLEPLQRSGVDTLVLGCTHYPLLSGLIQLVMGDNVTLVSSAEETAKEVLRVLTERDILRPHDAPPATRLFEATGDPEAFMALAARFLGPALTGVQPVRPSGMH</sequence>
<organism>
    <name type="scientific">Mycobacterium marinum (strain ATCC BAA-535 / M)</name>
    <dbReference type="NCBI Taxonomy" id="216594"/>
    <lineage>
        <taxon>Bacteria</taxon>
        <taxon>Bacillati</taxon>
        <taxon>Actinomycetota</taxon>
        <taxon>Actinomycetes</taxon>
        <taxon>Mycobacteriales</taxon>
        <taxon>Mycobacteriaceae</taxon>
        <taxon>Mycobacterium</taxon>
        <taxon>Mycobacterium ulcerans group</taxon>
    </lineage>
</organism>
<protein>
    <recommendedName>
        <fullName evidence="1">Glutamate racemase</fullName>
        <ecNumber evidence="1">5.1.1.3</ecNumber>
    </recommendedName>
</protein>
<comment type="function">
    <text evidence="1">Provides the (R)-glutamate required for cell wall biosynthesis.</text>
</comment>
<comment type="catalytic activity">
    <reaction evidence="1">
        <text>L-glutamate = D-glutamate</text>
        <dbReference type="Rhea" id="RHEA:12813"/>
        <dbReference type="ChEBI" id="CHEBI:29985"/>
        <dbReference type="ChEBI" id="CHEBI:29986"/>
        <dbReference type="EC" id="5.1.1.3"/>
    </reaction>
</comment>
<comment type="pathway">
    <text evidence="1">Cell wall biogenesis; peptidoglycan biosynthesis.</text>
</comment>
<comment type="similarity">
    <text evidence="1">Belongs to the aspartate/glutamate racemases family.</text>
</comment>
<dbReference type="EC" id="5.1.1.3" evidence="1"/>
<dbReference type="EMBL" id="CP000854">
    <property type="protein sequence ID" value="ACC42465.1"/>
    <property type="molecule type" value="Genomic_DNA"/>
</dbReference>
<dbReference type="RefSeq" id="WP_011741600.1">
    <property type="nucleotide sequence ID" value="NC_010612.1"/>
</dbReference>
<dbReference type="SMR" id="B2HQH3"/>
<dbReference type="STRING" id="216594.MMAR_4058"/>
<dbReference type="GeneID" id="34341495"/>
<dbReference type="KEGG" id="mmi:MMAR_4058"/>
<dbReference type="eggNOG" id="COG0796">
    <property type="taxonomic scope" value="Bacteria"/>
</dbReference>
<dbReference type="HOGENOM" id="CLU_052344_0_1_11"/>
<dbReference type="OrthoDB" id="9801055at2"/>
<dbReference type="UniPathway" id="UPA00219"/>
<dbReference type="Proteomes" id="UP000001190">
    <property type="component" value="Chromosome"/>
</dbReference>
<dbReference type="GO" id="GO:0008881">
    <property type="term" value="F:glutamate racemase activity"/>
    <property type="evidence" value="ECO:0007669"/>
    <property type="project" value="UniProtKB-UniRule"/>
</dbReference>
<dbReference type="GO" id="GO:0071555">
    <property type="term" value="P:cell wall organization"/>
    <property type="evidence" value="ECO:0007669"/>
    <property type="project" value="UniProtKB-KW"/>
</dbReference>
<dbReference type="GO" id="GO:0009252">
    <property type="term" value="P:peptidoglycan biosynthetic process"/>
    <property type="evidence" value="ECO:0007669"/>
    <property type="project" value="UniProtKB-UniRule"/>
</dbReference>
<dbReference type="GO" id="GO:0008360">
    <property type="term" value="P:regulation of cell shape"/>
    <property type="evidence" value="ECO:0007669"/>
    <property type="project" value="UniProtKB-KW"/>
</dbReference>
<dbReference type="FunFam" id="3.40.50.1860:FF:000001">
    <property type="entry name" value="Glutamate racemase"/>
    <property type="match status" value="1"/>
</dbReference>
<dbReference type="Gene3D" id="3.40.50.1860">
    <property type="match status" value="2"/>
</dbReference>
<dbReference type="HAMAP" id="MF_00258">
    <property type="entry name" value="Glu_racemase"/>
    <property type="match status" value="1"/>
</dbReference>
<dbReference type="InterPro" id="IPR015942">
    <property type="entry name" value="Asp/Glu/hydantoin_racemase"/>
</dbReference>
<dbReference type="InterPro" id="IPR001920">
    <property type="entry name" value="Asp/Glu_race"/>
</dbReference>
<dbReference type="InterPro" id="IPR018187">
    <property type="entry name" value="Asp/Glu_racemase_AS_1"/>
</dbReference>
<dbReference type="InterPro" id="IPR033134">
    <property type="entry name" value="Asp/Glu_racemase_AS_2"/>
</dbReference>
<dbReference type="InterPro" id="IPR004391">
    <property type="entry name" value="Glu_race"/>
</dbReference>
<dbReference type="NCBIfam" id="TIGR00067">
    <property type="entry name" value="glut_race"/>
    <property type="match status" value="1"/>
</dbReference>
<dbReference type="PANTHER" id="PTHR21198">
    <property type="entry name" value="GLUTAMATE RACEMASE"/>
    <property type="match status" value="1"/>
</dbReference>
<dbReference type="PANTHER" id="PTHR21198:SF2">
    <property type="entry name" value="GLUTAMATE RACEMASE"/>
    <property type="match status" value="1"/>
</dbReference>
<dbReference type="Pfam" id="PF01177">
    <property type="entry name" value="Asp_Glu_race"/>
    <property type="match status" value="1"/>
</dbReference>
<dbReference type="SUPFAM" id="SSF53681">
    <property type="entry name" value="Aspartate/glutamate racemase"/>
    <property type="match status" value="2"/>
</dbReference>
<dbReference type="PROSITE" id="PS00923">
    <property type="entry name" value="ASP_GLU_RACEMASE_1"/>
    <property type="match status" value="1"/>
</dbReference>
<dbReference type="PROSITE" id="PS00924">
    <property type="entry name" value="ASP_GLU_RACEMASE_2"/>
    <property type="match status" value="1"/>
</dbReference>
<evidence type="ECO:0000255" key="1">
    <source>
        <dbReference type="HAMAP-Rule" id="MF_00258"/>
    </source>
</evidence>
<keyword id="KW-0133">Cell shape</keyword>
<keyword id="KW-0961">Cell wall biogenesis/degradation</keyword>
<keyword id="KW-0413">Isomerase</keyword>
<keyword id="KW-0573">Peptidoglycan synthesis</keyword>
<keyword id="KW-1185">Reference proteome</keyword>
<accession>B2HQH3</accession>
<reference key="1">
    <citation type="journal article" date="2008" name="Genome Res.">
        <title>Insights from the complete genome sequence of Mycobacterium marinum on the evolution of Mycobacterium tuberculosis.</title>
        <authorList>
            <person name="Stinear T.P."/>
            <person name="Seemann T."/>
            <person name="Harrison P.F."/>
            <person name="Jenkin G.A."/>
            <person name="Davies J.K."/>
            <person name="Johnson P.D."/>
            <person name="Abdellah Z."/>
            <person name="Arrowsmith C."/>
            <person name="Chillingworth T."/>
            <person name="Churcher C."/>
            <person name="Clarke K."/>
            <person name="Cronin A."/>
            <person name="Davis P."/>
            <person name="Goodhead I."/>
            <person name="Holroyd N."/>
            <person name="Jagels K."/>
            <person name="Lord A."/>
            <person name="Moule S."/>
            <person name="Mungall K."/>
            <person name="Norbertczak H."/>
            <person name="Quail M.A."/>
            <person name="Rabbinowitsch E."/>
            <person name="Walker D."/>
            <person name="White B."/>
            <person name="Whitehead S."/>
            <person name="Small P.L."/>
            <person name="Brosch R."/>
            <person name="Ramakrishnan L."/>
            <person name="Fischbach M.A."/>
            <person name="Parkhill J."/>
            <person name="Cole S.T."/>
        </authorList>
    </citation>
    <scope>NUCLEOTIDE SEQUENCE [LARGE SCALE GENOMIC DNA]</scope>
    <source>
        <strain>ATCC BAA-535 / M</strain>
    </source>
</reference>